<keyword id="KW-0285">Flavoprotein</keyword>
<keyword id="KW-0288">FMN</keyword>
<keyword id="KW-0455">Luminescence</keyword>
<keyword id="KW-0503">Monooxygenase</keyword>
<keyword id="KW-0560">Oxidoreductase</keyword>
<keyword id="KW-0599">Photoprotein</keyword>
<keyword id="KW-1185">Reference proteome</keyword>
<evidence type="ECO:0000250" key="1">
    <source>
        <dbReference type="UniProtKB" id="P07740"/>
    </source>
</evidence>
<evidence type="ECO:0000250" key="2">
    <source>
        <dbReference type="UniProtKB" id="P19840"/>
    </source>
</evidence>
<evidence type="ECO:0000305" key="3"/>
<feature type="chain" id="PRO_0000220176" description="Alkanal monooxygenase beta chain">
    <location>
        <begin position="1"/>
        <end position="324"/>
    </location>
</feature>
<sequence>MKFGLFFLNFINSTTVQEQSIVRMQEITEYVDKLNFEQILVYENHFSGNGVVGAPLTVSGFLLGLTEKIKIGSLNHIITTHHPVRIAEEACLLDQLSEGRFILGFSDCEKKDEMRLFNRPVEYQQQLFEECYEIINDALTTGYCNPDNDFYSFPKISVNPHAYTQGGPRRYVTATSHHIVEWAAKKGIPLIFKWDDSNDVRYEYAERYKAVADKYGIDLSAIDHQLMVLVNYNEDSHKAKQETRAFIRDYVLEMYPNENLENKLEEIITENAVGDYTECIAAAKLAIEKCGAKSVLLSFEPMNDLMHQKNVINIVNDNIKKYHM</sequence>
<name>LUXB_PHOLL</name>
<gene>
    <name type="primary">luxB</name>
    <name type="ordered locus">plu2082</name>
</gene>
<dbReference type="EC" id="1.14.14.3" evidence="2"/>
<dbReference type="EMBL" id="BX571866">
    <property type="protein sequence ID" value="CAE14375.1"/>
    <property type="molecule type" value="Genomic_DNA"/>
</dbReference>
<dbReference type="RefSeq" id="WP_011146337.1">
    <property type="nucleotide sequence ID" value="NC_005126.1"/>
</dbReference>
<dbReference type="SMR" id="Q7N574"/>
<dbReference type="STRING" id="243265.plu2082"/>
<dbReference type="GeneID" id="48848358"/>
<dbReference type="KEGG" id="plu:plu2082"/>
<dbReference type="eggNOG" id="COG2141">
    <property type="taxonomic scope" value="Bacteria"/>
</dbReference>
<dbReference type="HOGENOM" id="CLU_027853_3_0_6"/>
<dbReference type="OrthoDB" id="7903015at2"/>
<dbReference type="Proteomes" id="UP000002514">
    <property type="component" value="Chromosome"/>
</dbReference>
<dbReference type="GO" id="GO:0005829">
    <property type="term" value="C:cytosol"/>
    <property type="evidence" value="ECO:0007669"/>
    <property type="project" value="TreeGrafter"/>
</dbReference>
<dbReference type="GO" id="GO:0047646">
    <property type="term" value="F:alkanal monooxygenase (FMN-linked) activity"/>
    <property type="evidence" value="ECO:0007669"/>
    <property type="project" value="UniProtKB-EC"/>
</dbReference>
<dbReference type="GO" id="GO:0008218">
    <property type="term" value="P:bioluminescence"/>
    <property type="evidence" value="ECO:0007669"/>
    <property type="project" value="UniProtKB-KW"/>
</dbReference>
<dbReference type="CDD" id="cd01096">
    <property type="entry name" value="Alkanal_monooxygenase"/>
    <property type="match status" value="1"/>
</dbReference>
<dbReference type="Gene3D" id="3.20.20.30">
    <property type="entry name" value="Luciferase-like domain"/>
    <property type="match status" value="2"/>
</dbReference>
<dbReference type="InterPro" id="IPR033924">
    <property type="entry name" value="Alkanal_monooxygenase"/>
</dbReference>
<dbReference type="InterPro" id="IPR050766">
    <property type="entry name" value="Bact_Lucif_Oxidored"/>
</dbReference>
<dbReference type="InterPro" id="IPR018235">
    <property type="entry name" value="Bacterial_luciferase_CS"/>
</dbReference>
<dbReference type="InterPro" id="IPR011251">
    <property type="entry name" value="Luciferase-like_dom"/>
</dbReference>
<dbReference type="InterPro" id="IPR036661">
    <property type="entry name" value="Luciferase-like_sf"/>
</dbReference>
<dbReference type="InterPro" id="IPR002103">
    <property type="entry name" value="Luciferase_bac/NFP"/>
</dbReference>
<dbReference type="PANTHER" id="PTHR30137:SF8">
    <property type="entry name" value="BLR5498 PROTEIN"/>
    <property type="match status" value="1"/>
</dbReference>
<dbReference type="PANTHER" id="PTHR30137">
    <property type="entry name" value="LUCIFERASE-LIKE MONOOXYGENASE"/>
    <property type="match status" value="1"/>
</dbReference>
<dbReference type="Pfam" id="PF00296">
    <property type="entry name" value="Bac_luciferase"/>
    <property type="match status" value="1"/>
</dbReference>
<dbReference type="PRINTS" id="PR00089">
    <property type="entry name" value="LUCIFERASE"/>
</dbReference>
<dbReference type="SUPFAM" id="SSF51679">
    <property type="entry name" value="Bacterial luciferase-like"/>
    <property type="match status" value="1"/>
</dbReference>
<dbReference type="PROSITE" id="PS00494">
    <property type="entry name" value="BACTERIAL_LUCIFERASE"/>
    <property type="match status" value="1"/>
</dbReference>
<reference key="1">
    <citation type="journal article" date="2003" name="Nat. Biotechnol.">
        <title>The genome sequence of the entomopathogenic bacterium Photorhabdus luminescens.</title>
        <authorList>
            <person name="Duchaud E."/>
            <person name="Rusniok C."/>
            <person name="Frangeul L."/>
            <person name="Buchrieser C."/>
            <person name="Givaudan A."/>
            <person name="Taourit S."/>
            <person name="Bocs S."/>
            <person name="Boursaux-Eude C."/>
            <person name="Chandler M."/>
            <person name="Charles J.-F."/>
            <person name="Dassa E."/>
            <person name="Derose R."/>
            <person name="Derzelle S."/>
            <person name="Freyssinet G."/>
            <person name="Gaudriault S."/>
            <person name="Medigue C."/>
            <person name="Lanois A."/>
            <person name="Powell K."/>
            <person name="Siguier P."/>
            <person name="Vincent R."/>
            <person name="Wingate V."/>
            <person name="Zouine M."/>
            <person name="Glaser P."/>
            <person name="Boemare N."/>
            <person name="Danchin A."/>
            <person name="Kunst F."/>
        </authorList>
    </citation>
    <scope>NUCLEOTIDE SEQUENCE [LARGE SCALE GENOMIC DNA]</scope>
    <source>
        <strain>DSM 15139 / CIP 105565 / TT01</strain>
    </source>
</reference>
<accession>Q7N574</accession>
<protein>
    <recommendedName>
        <fullName>Alkanal monooxygenase beta chain</fullName>
        <ecNumber evidence="2">1.14.14.3</ecNumber>
    </recommendedName>
    <alternativeName>
        <fullName>Bacterial luciferase beta chain</fullName>
    </alternativeName>
</protein>
<proteinExistence type="inferred from homology"/>
<comment type="function">
    <text evidence="2">Light-emitting reaction in luminous bacteria. The specific role of the beta subunit is unknown, but it is absolutely required for bioluminescence activity.</text>
</comment>
<comment type="catalytic activity">
    <reaction evidence="2">
        <text>a long-chain fatty aldehyde + FMNH2 + O2 = a long-chain fatty acid + hnu + FMN + H2O + 2 H(+)</text>
        <dbReference type="Rhea" id="RHEA:17181"/>
        <dbReference type="ChEBI" id="CHEBI:15377"/>
        <dbReference type="ChEBI" id="CHEBI:15378"/>
        <dbReference type="ChEBI" id="CHEBI:15379"/>
        <dbReference type="ChEBI" id="CHEBI:17176"/>
        <dbReference type="ChEBI" id="CHEBI:30212"/>
        <dbReference type="ChEBI" id="CHEBI:57560"/>
        <dbReference type="ChEBI" id="CHEBI:57618"/>
        <dbReference type="ChEBI" id="CHEBI:58210"/>
        <dbReference type="EC" id="1.14.14.3"/>
    </reaction>
</comment>
<comment type="subunit">
    <text evidence="1">Heterodimer of an alpha and a beta chain.</text>
</comment>
<comment type="similarity">
    <text evidence="3">Belongs to the bacterial luciferase oxidoreductase family.</text>
</comment>
<organism>
    <name type="scientific">Photorhabdus laumondii subsp. laumondii (strain DSM 15139 / CIP 105565 / TT01)</name>
    <name type="common">Photorhabdus luminescens subsp. laumondii</name>
    <dbReference type="NCBI Taxonomy" id="243265"/>
    <lineage>
        <taxon>Bacteria</taxon>
        <taxon>Pseudomonadati</taxon>
        <taxon>Pseudomonadota</taxon>
        <taxon>Gammaproteobacteria</taxon>
        <taxon>Enterobacterales</taxon>
        <taxon>Morganellaceae</taxon>
        <taxon>Photorhabdus</taxon>
    </lineage>
</organism>